<sequence length="578" mass="67007">MKVYCGYIGEEHLEKNVILNGWVKKVRKMGNLVFVDLKDRFGIVQIFATKSDGVFNELTQLSREDVINVEGLVLLRKNPNNDLKTGRFEIHVKKILIYSKAKTPPLIIEDETDANEEIRFRYRYLDLRRDVNLKIFELRSKVYQAFRNYLYSQDFIETETPILAKPTPEGARDFYVPTRTRKFYALPQSPQTFKQLLMVAGFQKYFQITKCFRDEDLRSDRQPEFTQVDIELSFADEIEIQTLIENLLKYVFKQTINVDLTTPFMRMSYEQAINDYGSDKPDLRFDLKIKTLNTYFENSKTLFFQKALLNNQSIRAILVPNINLNKKQVQTLEKFAKDKGAKGLSWISIKDEKIIDGSLLSIQEDHIIYKTIFKDFNLSTGSILLVADTFDIASQALGLVRINLASILNLKKPNIFKFVWIIDWPLYEYDNEAQRFVAAHHPFTMPTLETLNTFDVNKKDARGRSYDIVLNGYELGGGSVRIIDQQIQRRMFKSINMSDEEANLKFGFLLTAFEYGVPPHCGIALGLDRLMMILVNSEYIRDVVAFPKNNNGVDMMLDAPSNMNDEDLKELGLKIKND</sequence>
<reference key="1">
    <citation type="journal article" date="2000" name="Nature">
        <title>The complete sequence of the mucosal pathogen Ureaplasma urealyticum.</title>
        <authorList>
            <person name="Glass J.I."/>
            <person name="Lefkowitz E.J."/>
            <person name="Glass J.S."/>
            <person name="Heiner C.R."/>
            <person name="Chen E.Y."/>
            <person name="Cassell G.H."/>
        </authorList>
    </citation>
    <scope>NUCLEOTIDE SEQUENCE [LARGE SCALE GENOMIC DNA]</scope>
    <source>
        <strain>ATCC 700970</strain>
    </source>
</reference>
<protein>
    <recommendedName>
        <fullName evidence="1">Aspartate--tRNA ligase</fullName>
        <ecNumber evidence="1">6.1.1.12</ecNumber>
    </recommendedName>
    <alternativeName>
        <fullName evidence="1">Aspartyl-tRNA synthetase</fullName>
        <shortName evidence="1">AspRS</shortName>
    </alternativeName>
</protein>
<proteinExistence type="inferred from homology"/>
<keyword id="KW-0030">Aminoacyl-tRNA synthetase</keyword>
<keyword id="KW-0067">ATP-binding</keyword>
<keyword id="KW-0963">Cytoplasm</keyword>
<keyword id="KW-0436">Ligase</keyword>
<keyword id="KW-0547">Nucleotide-binding</keyword>
<keyword id="KW-0648">Protein biosynthesis</keyword>
<keyword id="KW-1185">Reference proteome</keyword>
<name>SYD_UREPA</name>
<dbReference type="EC" id="6.1.1.12" evidence="1"/>
<dbReference type="EMBL" id="AF222894">
    <property type="protein sequence ID" value="AAF30695.1"/>
    <property type="molecule type" value="Genomic_DNA"/>
</dbReference>
<dbReference type="RefSeq" id="WP_006688860.1">
    <property type="nucleotide sequence ID" value="NC_002162.1"/>
</dbReference>
<dbReference type="SMR" id="Q9PQK5"/>
<dbReference type="STRING" id="273119.UU286"/>
<dbReference type="EnsemblBacteria" id="AAF30695">
    <property type="protein sequence ID" value="AAF30695"/>
    <property type="gene ID" value="UU286"/>
</dbReference>
<dbReference type="GeneID" id="29672656"/>
<dbReference type="KEGG" id="uur:UU286"/>
<dbReference type="eggNOG" id="COG0173">
    <property type="taxonomic scope" value="Bacteria"/>
</dbReference>
<dbReference type="HOGENOM" id="CLU_014330_3_2_14"/>
<dbReference type="OrthoDB" id="9802326at2"/>
<dbReference type="Proteomes" id="UP000000423">
    <property type="component" value="Chromosome"/>
</dbReference>
<dbReference type="GO" id="GO:0005737">
    <property type="term" value="C:cytoplasm"/>
    <property type="evidence" value="ECO:0007669"/>
    <property type="project" value="UniProtKB-SubCell"/>
</dbReference>
<dbReference type="GO" id="GO:0004815">
    <property type="term" value="F:aspartate-tRNA ligase activity"/>
    <property type="evidence" value="ECO:0007669"/>
    <property type="project" value="UniProtKB-UniRule"/>
</dbReference>
<dbReference type="GO" id="GO:0005524">
    <property type="term" value="F:ATP binding"/>
    <property type="evidence" value="ECO:0007669"/>
    <property type="project" value="UniProtKB-UniRule"/>
</dbReference>
<dbReference type="GO" id="GO:0003676">
    <property type="term" value="F:nucleic acid binding"/>
    <property type="evidence" value="ECO:0007669"/>
    <property type="project" value="InterPro"/>
</dbReference>
<dbReference type="GO" id="GO:0006422">
    <property type="term" value="P:aspartyl-tRNA aminoacylation"/>
    <property type="evidence" value="ECO:0007669"/>
    <property type="project" value="UniProtKB-UniRule"/>
</dbReference>
<dbReference type="CDD" id="cd00777">
    <property type="entry name" value="AspRS_core"/>
    <property type="match status" value="1"/>
</dbReference>
<dbReference type="CDD" id="cd04317">
    <property type="entry name" value="EcAspRS_like_N"/>
    <property type="match status" value="1"/>
</dbReference>
<dbReference type="Gene3D" id="3.30.930.10">
    <property type="entry name" value="Bira Bifunctional Protein, Domain 2"/>
    <property type="match status" value="1"/>
</dbReference>
<dbReference type="Gene3D" id="3.30.1360.30">
    <property type="entry name" value="GAD-like domain"/>
    <property type="match status" value="1"/>
</dbReference>
<dbReference type="Gene3D" id="2.40.50.140">
    <property type="entry name" value="Nucleic acid-binding proteins"/>
    <property type="match status" value="1"/>
</dbReference>
<dbReference type="HAMAP" id="MF_00044">
    <property type="entry name" value="Asp_tRNA_synth_type1"/>
    <property type="match status" value="1"/>
</dbReference>
<dbReference type="InterPro" id="IPR004364">
    <property type="entry name" value="Aa-tRNA-synt_II"/>
</dbReference>
<dbReference type="InterPro" id="IPR006195">
    <property type="entry name" value="aa-tRNA-synth_II"/>
</dbReference>
<dbReference type="InterPro" id="IPR045864">
    <property type="entry name" value="aa-tRNA-synth_II/BPL/LPL"/>
</dbReference>
<dbReference type="InterPro" id="IPR004524">
    <property type="entry name" value="Asp-tRNA-ligase_1"/>
</dbReference>
<dbReference type="InterPro" id="IPR047089">
    <property type="entry name" value="Asp-tRNA-ligase_1_N"/>
</dbReference>
<dbReference type="InterPro" id="IPR002312">
    <property type="entry name" value="Asp/Asn-tRNA-synth_IIb"/>
</dbReference>
<dbReference type="InterPro" id="IPR047090">
    <property type="entry name" value="AspRS_core"/>
</dbReference>
<dbReference type="InterPro" id="IPR004115">
    <property type="entry name" value="GAD-like_sf"/>
</dbReference>
<dbReference type="InterPro" id="IPR029351">
    <property type="entry name" value="GAD_dom"/>
</dbReference>
<dbReference type="InterPro" id="IPR012340">
    <property type="entry name" value="NA-bd_OB-fold"/>
</dbReference>
<dbReference type="InterPro" id="IPR004365">
    <property type="entry name" value="NA-bd_OB_tRNA"/>
</dbReference>
<dbReference type="NCBIfam" id="TIGR00459">
    <property type="entry name" value="aspS_bact"/>
    <property type="match status" value="1"/>
</dbReference>
<dbReference type="NCBIfam" id="NF001750">
    <property type="entry name" value="PRK00476.1"/>
    <property type="match status" value="1"/>
</dbReference>
<dbReference type="PANTHER" id="PTHR22594:SF5">
    <property type="entry name" value="ASPARTATE--TRNA LIGASE, MITOCHONDRIAL"/>
    <property type="match status" value="1"/>
</dbReference>
<dbReference type="PANTHER" id="PTHR22594">
    <property type="entry name" value="ASPARTYL/LYSYL-TRNA SYNTHETASE"/>
    <property type="match status" value="1"/>
</dbReference>
<dbReference type="Pfam" id="PF02938">
    <property type="entry name" value="GAD"/>
    <property type="match status" value="1"/>
</dbReference>
<dbReference type="Pfam" id="PF00152">
    <property type="entry name" value="tRNA-synt_2"/>
    <property type="match status" value="1"/>
</dbReference>
<dbReference type="Pfam" id="PF01336">
    <property type="entry name" value="tRNA_anti-codon"/>
    <property type="match status" value="1"/>
</dbReference>
<dbReference type="PRINTS" id="PR01042">
    <property type="entry name" value="TRNASYNTHASP"/>
</dbReference>
<dbReference type="SUPFAM" id="SSF55681">
    <property type="entry name" value="Class II aaRS and biotin synthetases"/>
    <property type="match status" value="1"/>
</dbReference>
<dbReference type="SUPFAM" id="SSF55261">
    <property type="entry name" value="GAD domain-like"/>
    <property type="match status" value="1"/>
</dbReference>
<dbReference type="SUPFAM" id="SSF50249">
    <property type="entry name" value="Nucleic acid-binding proteins"/>
    <property type="match status" value="1"/>
</dbReference>
<dbReference type="PROSITE" id="PS50862">
    <property type="entry name" value="AA_TRNA_LIGASE_II"/>
    <property type="match status" value="1"/>
</dbReference>
<evidence type="ECO:0000255" key="1">
    <source>
        <dbReference type="HAMAP-Rule" id="MF_00044"/>
    </source>
</evidence>
<gene>
    <name evidence="1" type="primary">aspS</name>
    <name type="ordered locus">UU286</name>
</gene>
<feature type="chain" id="PRO_0000110975" description="Aspartate--tRNA ligase">
    <location>
        <begin position="1"/>
        <end position="578"/>
    </location>
</feature>
<feature type="region of interest" description="Aspartate" evidence="1">
    <location>
        <begin position="191"/>
        <end position="194"/>
    </location>
</feature>
<feature type="binding site" evidence="1">
    <location>
        <position position="169"/>
    </location>
    <ligand>
        <name>L-aspartate</name>
        <dbReference type="ChEBI" id="CHEBI:29991"/>
    </ligand>
</feature>
<feature type="binding site" evidence="1">
    <location>
        <begin position="213"/>
        <end position="215"/>
    </location>
    <ligand>
        <name>ATP</name>
        <dbReference type="ChEBI" id="CHEBI:30616"/>
    </ligand>
</feature>
<feature type="binding site" evidence="1">
    <location>
        <position position="213"/>
    </location>
    <ligand>
        <name>L-aspartate</name>
        <dbReference type="ChEBI" id="CHEBI:29991"/>
    </ligand>
</feature>
<feature type="binding site" evidence="1">
    <location>
        <position position="222"/>
    </location>
    <ligand>
        <name>ATP</name>
        <dbReference type="ChEBI" id="CHEBI:30616"/>
    </ligand>
</feature>
<feature type="binding site" evidence="1">
    <location>
        <position position="440"/>
    </location>
    <ligand>
        <name>L-aspartate</name>
        <dbReference type="ChEBI" id="CHEBI:29991"/>
    </ligand>
</feature>
<feature type="binding site" evidence="1">
    <location>
        <position position="474"/>
    </location>
    <ligand>
        <name>ATP</name>
        <dbReference type="ChEBI" id="CHEBI:30616"/>
    </ligand>
</feature>
<feature type="binding site" evidence="1">
    <location>
        <position position="481"/>
    </location>
    <ligand>
        <name>L-aspartate</name>
        <dbReference type="ChEBI" id="CHEBI:29991"/>
    </ligand>
</feature>
<feature type="binding site" evidence="1">
    <location>
        <begin position="526"/>
        <end position="529"/>
    </location>
    <ligand>
        <name>ATP</name>
        <dbReference type="ChEBI" id="CHEBI:30616"/>
    </ligand>
</feature>
<organism>
    <name type="scientific">Ureaplasma parvum serovar 3 (strain ATCC 700970)</name>
    <dbReference type="NCBI Taxonomy" id="273119"/>
    <lineage>
        <taxon>Bacteria</taxon>
        <taxon>Bacillati</taxon>
        <taxon>Mycoplasmatota</taxon>
        <taxon>Mycoplasmoidales</taxon>
        <taxon>Mycoplasmoidaceae</taxon>
        <taxon>Ureaplasma</taxon>
    </lineage>
</organism>
<accession>Q9PQK5</accession>
<comment type="function">
    <text evidence="1">Catalyzes the attachment of L-aspartate to tRNA(Asp) in a two-step reaction: L-aspartate is first activated by ATP to form Asp-AMP and then transferred to the acceptor end of tRNA(Asp).</text>
</comment>
<comment type="catalytic activity">
    <reaction evidence="1">
        <text>tRNA(Asp) + L-aspartate + ATP = L-aspartyl-tRNA(Asp) + AMP + diphosphate</text>
        <dbReference type="Rhea" id="RHEA:19649"/>
        <dbReference type="Rhea" id="RHEA-COMP:9660"/>
        <dbReference type="Rhea" id="RHEA-COMP:9678"/>
        <dbReference type="ChEBI" id="CHEBI:29991"/>
        <dbReference type="ChEBI" id="CHEBI:30616"/>
        <dbReference type="ChEBI" id="CHEBI:33019"/>
        <dbReference type="ChEBI" id="CHEBI:78442"/>
        <dbReference type="ChEBI" id="CHEBI:78516"/>
        <dbReference type="ChEBI" id="CHEBI:456215"/>
        <dbReference type="EC" id="6.1.1.12"/>
    </reaction>
</comment>
<comment type="subunit">
    <text evidence="1">Homodimer.</text>
</comment>
<comment type="subcellular location">
    <subcellularLocation>
        <location evidence="1">Cytoplasm</location>
    </subcellularLocation>
</comment>
<comment type="similarity">
    <text evidence="1">Belongs to the class-II aminoacyl-tRNA synthetase family. Type 1 subfamily.</text>
</comment>